<proteinExistence type="inferred from homology"/>
<sequence length="121" mass="13422">MARIAGVDIPNDKRVVISLTYVYGIGLATSKKILAAAGISEDVRVRDLTSDQEDAIRREVDAIKVEGDLRREVNLNIKRLMEIGSYRGIRHRRGLPVRGQNTKNNARTRKGKAVAIAGKKK</sequence>
<accession>Q04ML3</accession>
<name>RS13_STRP2</name>
<gene>
    <name evidence="1" type="primary">rpsM</name>
    <name type="ordered locus">SPD_0216</name>
</gene>
<protein>
    <recommendedName>
        <fullName evidence="1">Small ribosomal subunit protein uS13</fullName>
    </recommendedName>
    <alternativeName>
        <fullName evidence="3">30S ribosomal protein S13</fullName>
    </alternativeName>
</protein>
<evidence type="ECO:0000255" key="1">
    <source>
        <dbReference type="HAMAP-Rule" id="MF_01315"/>
    </source>
</evidence>
<evidence type="ECO:0000256" key="2">
    <source>
        <dbReference type="SAM" id="MobiDB-lite"/>
    </source>
</evidence>
<evidence type="ECO:0000305" key="3"/>
<keyword id="KW-1185">Reference proteome</keyword>
<keyword id="KW-0687">Ribonucleoprotein</keyword>
<keyword id="KW-0689">Ribosomal protein</keyword>
<keyword id="KW-0694">RNA-binding</keyword>
<keyword id="KW-0699">rRNA-binding</keyword>
<keyword id="KW-0820">tRNA-binding</keyword>
<organism>
    <name type="scientific">Streptococcus pneumoniae serotype 2 (strain D39 / NCTC 7466)</name>
    <dbReference type="NCBI Taxonomy" id="373153"/>
    <lineage>
        <taxon>Bacteria</taxon>
        <taxon>Bacillati</taxon>
        <taxon>Bacillota</taxon>
        <taxon>Bacilli</taxon>
        <taxon>Lactobacillales</taxon>
        <taxon>Streptococcaceae</taxon>
        <taxon>Streptococcus</taxon>
    </lineage>
</organism>
<reference key="1">
    <citation type="journal article" date="2007" name="J. Bacteriol.">
        <title>Genome sequence of Avery's virulent serotype 2 strain D39 of Streptococcus pneumoniae and comparison with that of unencapsulated laboratory strain R6.</title>
        <authorList>
            <person name="Lanie J.A."/>
            <person name="Ng W.-L."/>
            <person name="Kazmierczak K.M."/>
            <person name="Andrzejewski T.M."/>
            <person name="Davidsen T.M."/>
            <person name="Wayne K.J."/>
            <person name="Tettelin H."/>
            <person name="Glass J.I."/>
            <person name="Winkler M.E."/>
        </authorList>
    </citation>
    <scope>NUCLEOTIDE SEQUENCE [LARGE SCALE GENOMIC DNA]</scope>
    <source>
        <strain>D39 / NCTC 7466</strain>
    </source>
</reference>
<comment type="function">
    <text evidence="1">Located at the top of the head of the 30S subunit, it contacts several helices of the 16S rRNA. In the 70S ribosome it contacts the 23S rRNA (bridge B1a) and protein L5 of the 50S subunit (bridge B1b), connecting the 2 subunits; these bridges are implicated in subunit movement. Contacts the tRNAs in the A and P-sites.</text>
</comment>
<comment type="subunit">
    <text evidence="1">Part of the 30S ribosomal subunit. Forms a loose heterodimer with protein S19. Forms two bridges to the 50S subunit in the 70S ribosome.</text>
</comment>
<comment type="similarity">
    <text evidence="1">Belongs to the universal ribosomal protein uS13 family.</text>
</comment>
<feature type="chain" id="PRO_0000306717" description="Small ribosomal subunit protein uS13">
    <location>
        <begin position="1"/>
        <end position="121"/>
    </location>
</feature>
<feature type="region of interest" description="Disordered" evidence="2">
    <location>
        <begin position="96"/>
        <end position="121"/>
    </location>
</feature>
<feature type="compositionally biased region" description="Basic residues" evidence="2">
    <location>
        <begin position="106"/>
        <end position="121"/>
    </location>
</feature>
<dbReference type="EMBL" id="CP000410">
    <property type="protein sequence ID" value="ABJ54343.1"/>
    <property type="molecule type" value="Genomic_DNA"/>
</dbReference>
<dbReference type="RefSeq" id="WP_000090781.1">
    <property type="nucleotide sequence ID" value="NZ_JAMLJR010000002.1"/>
</dbReference>
<dbReference type="SMR" id="Q04ML3"/>
<dbReference type="PaxDb" id="373153-SPD_0216"/>
<dbReference type="GeneID" id="93738981"/>
<dbReference type="KEGG" id="spd:SPD_0216"/>
<dbReference type="eggNOG" id="COG0099">
    <property type="taxonomic scope" value="Bacteria"/>
</dbReference>
<dbReference type="HOGENOM" id="CLU_103849_1_1_9"/>
<dbReference type="BioCyc" id="SPNE373153:G1G6V-240-MONOMER"/>
<dbReference type="Proteomes" id="UP000001452">
    <property type="component" value="Chromosome"/>
</dbReference>
<dbReference type="GO" id="GO:0005829">
    <property type="term" value="C:cytosol"/>
    <property type="evidence" value="ECO:0007669"/>
    <property type="project" value="TreeGrafter"/>
</dbReference>
<dbReference type="GO" id="GO:0015935">
    <property type="term" value="C:small ribosomal subunit"/>
    <property type="evidence" value="ECO:0007669"/>
    <property type="project" value="TreeGrafter"/>
</dbReference>
<dbReference type="GO" id="GO:0019843">
    <property type="term" value="F:rRNA binding"/>
    <property type="evidence" value="ECO:0007669"/>
    <property type="project" value="UniProtKB-UniRule"/>
</dbReference>
<dbReference type="GO" id="GO:0003735">
    <property type="term" value="F:structural constituent of ribosome"/>
    <property type="evidence" value="ECO:0007669"/>
    <property type="project" value="InterPro"/>
</dbReference>
<dbReference type="GO" id="GO:0000049">
    <property type="term" value="F:tRNA binding"/>
    <property type="evidence" value="ECO:0007669"/>
    <property type="project" value="UniProtKB-UniRule"/>
</dbReference>
<dbReference type="GO" id="GO:0006412">
    <property type="term" value="P:translation"/>
    <property type="evidence" value="ECO:0007669"/>
    <property type="project" value="UniProtKB-UniRule"/>
</dbReference>
<dbReference type="FunFam" id="1.10.8.50:FF:000001">
    <property type="entry name" value="30S ribosomal protein S13"/>
    <property type="match status" value="1"/>
</dbReference>
<dbReference type="FunFam" id="4.10.910.10:FF:000001">
    <property type="entry name" value="30S ribosomal protein S13"/>
    <property type="match status" value="1"/>
</dbReference>
<dbReference type="Gene3D" id="1.10.8.50">
    <property type="match status" value="1"/>
</dbReference>
<dbReference type="Gene3D" id="4.10.910.10">
    <property type="entry name" value="30s ribosomal protein s13, domain 2"/>
    <property type="match status" value="1"/>
</dbReference>
<dbReference type="HAMAP" id="MF_01315">
    <property type="entry name" value="Ribosomal_uS13"/>
    <property type="match status" value="1"/>
</dbReference>
<dbReference type="InterPro" id="IPR027437">
    <property type="entry name" value="Rbsml_uS13_C"/>
</dbReference>
<dbReference type="InterPro" id="IPR001892">
    <property type="entry name" value="Ribosomal_uS13"/>
</dbReference>
<dbReference type="InterPro" id="IPR010979">
    <property type="entry name" value="Ribosomal_uS13-like_H2TH"/>
</dbReference>
<dbReference type="InterPro" id="IPR019980">
    <property type="entry name" value="Ribosomal_uS13_bac-type"/>
</dbReference>
<dbReference type="InterPro" id="IPR018269">
    <property type="entry name" value="Ribosomal_uS13_CS"/>
</dbReference>
<dbReference type="NCBIfam" id="TIGR03631">
    <property type="entry name" value="uS13_bact"/>
    <property type="match status" value="1"/>
</dbReference>
<dbReference type="PANTHER" id="PTHR10871">
    <property type="entry name" value="30S RIBOSOMAL PROTEIN S13/40S RIBOSOMAL PROTEIN S18"/>
    <property type="match status" value="1"/>
</dbReference>
<dbReference type="PANTHER" id="PTHR10871:SF1">
    <property type="entry name" value="SMALL RIBOSOMAL SUBUNIT PROTEIN US13M"/>
    <property type="match status" value="1"/>
</dbReference>
<dbReference type="Pfam" id="PF00416">
    <property type="entry name" value="Ribosomal_S13"/>
    <property type="match status" value="1"/>
</dbReference>
<dbReference type="PIRSF" id="PIRSF002134">
    <property type="entry name" value="Ribosomal_S13"/>
    <property type="match status" value="1"/>
</dbReference>
<dbReference type="SUPFAM" id="SSF46946">
    <property type="entry name" value="S13-like H2TH domain"/>
    <property type="match status" value="1"/>
</dbReference>
<dbReference type="PROSITE" id="PS00646">
    <property type="entry name" value="RIBOSOMAL_S13_1"/>
    <property type="match status" value="1"/>
</dbReference>
<dbReference type="PROSITE" id="PS50159">
    <property type="entry name" value="RIBOSOMAL_S13_2"/>
    <property type="match status" value="1"/>
</dbReference>